<proteinExistence type="evidence at protein level"/>
<accession>P25516</accession>
<accession>P78060</accession>
<accession>P78148</accession>
<dbReference type="EC" id="4.2.1.3" evidence="2"/>
<dbReference type="EMBL" id="X60293">
    <property type="protein sequence ID" value="CAA42834.1"/>
    <property type="molecule type" value="Genomic_DNA"/>
</dbReference>
<dbReference type="EMBL" id="U00096">
    <property type="protein sequence ID" value="AAC74358.1"/>
    <property type="molecule type" value="Genomic_DNA"/>
</dbReference>
<dbReference type="EMBL" id="AP009048">
    <property type="protein sequence ID" value="BAA14828.1"/>
    <property type="molecule type" value="Genomic_DNA"/>
</dbReference>
<dbReference type="PIR" id="G64875">
    <property type="entry name" value="G64875"/>
</dbReference>
<dbReference type="RefSeq" id="NP_415792.1">
    <property type="nucleotide sequence ID" value="NC_000913.3"/>
</dbReference>
<dbReference type="RefSeq" id="WP_000099535.1">
    <property type="nucleotide sequence ID" value="NZ_LN832404.1"/>
</dbReference>
<dbReference type="SMR" id="P25516"/>
<dbReference type="BioGRID" id="4260134">
    <property type="interactions" value="25"/>
</dbReference>
<dbReference type="BioGRID" id="851065">
    <property type="interactions" value="2"/>
</dbReference>
<dbReference type="DIP" id="DIP-9043N"/>
<dbReference type="FunCoup" id="P25516">
    <property type="interactions" value="807"/>
</dbReference>
<dbReference type="IntAct" id="P25516">
    <property type="interactions" value="13"/>
</dbReference>
<dbReference type="STRING" id="511145.b1276"/>
<dbReference type="jPOST" id="P25516"/>
<dbReference type="PaxDb" id="511145-b1276"/>
<dbReference type="EnsemblBacteria" id="AAC74358">
    <property type="protein sequence ID" value="AAC74358"/>
    <property type="gene ID" value="b1276"/>
</dbReference>
<dbReference type="GeneID" id="946724"/>
<dbReference type="KEGG" id="ecj:JW1268"/>
<dbReference type="KEGG" id="eco:b1276"/>
<dbReference type="PATRIC" id="fig|511145.12.peg.1327"/>
<dbReference type="EchoBASE" id="EB1301"/>
<dbReference type="eggNOG" id="COG1048">
    <property type="taxonomic scope" value="Bacteria"/>
</dbReference>
<dbReference type="HOGENOM" id="CLU_013476_2_1_6"/>
<dbReference type="InParanoid" id="P25516"/>
<dbReference type="PhylomeDB" id="P25516"/>
<dbReference type="BioCyc" id="EcoCyc:ACONITASE-MONOMER"/>
<dbReference type="BioCyc" id="MetaCyc:ACONITASE-MONOMER"/>
<dbReference type="BRENDA" id="4.2.1.3">
    <property type="organism ID" value="2026"/>
</dbReference>
<dbReference type="SABIO-RK" id="P25516"/>
<dbReference type="UniPathway" id="UPA00223">
    <property type="reaction ID" value="UER00718"/>
</dbReference>
<dbReference type="PRO" id="PR:P25516"/>
<dbReference type="Proteomes" id="UP000000625">
    <property type="component" value="Chromosome"/>
</dbReference>
<dbReference type="GO" id="GO:0005737">
    <property type="term" value="C:cytoplasm"/>
    <property type="evidence" value="ECO:0000314"/>
    <property type="project" value="EcoliWiki"/>
</dbReference>
<dbReference type="GO" id="GO:0005829">
    <property type="term" value="C:cytosol"/>
    <property type="evidence" value="ECO:0000314"/>
    <property type="project" value="EcoCyc"/>
</dbReference>
<dbReference type="GO" id="GO:0051539">
    <property type="term" value="F:4 iron, 4 sulfur cluster binding"/>
    <property type="evidence" value="ECO:0000314"/>
    <property type="project" value="EcoliWiki"/>
</dbReference>
<dbReference type="GO" id="GO:0003994">
    <property type="term" value="F:aconitate hydratase activity"/>
    <property type="evidence" value="ECO:0000314"/>
    <property type="project" value="EcoliWiki"/>
</dbReference>
<dbReference type="GO" id="GO:0005506">
    <property type="term" value="F:iron ion binding"/>
    <property type="evidence" value="ECO:0000315"/>
    <property type="project" value="EcoliWiki"/>
</dbReference>
<dbReference type="GO" id="GO:0030350">
    <property type="term" value="F:iron-responsive element binding"/>
    <property type="evidence" value="ECO:0000318"/>
    <property type="project" value="GO_Central"/>
</dbReference>
<dbReference type="GO" id="GO:0046872">
    <property type="term" value="F:metal ion binding"/>
    <property type="evidence" value="ECO:0000314"/>
    <property type="project" value="EcoliWiki"/>
</dbReference>
<dbReference type="GO" id="GO:0003730">
    <property type="term" value="F:mRNA 3'-UTR binding"/>
    <property type="evidence" value="ECO:0000314"/>
    <property type="project" value="EcoCyc"/>
</dbReference>
<dbReference type="GO" id="GO:0003729">
    <property type="term" value="F:mRNA binding"/>
    <property type="evidence" value="ECO:0000314"/>
    <property type="project" value="EcoliWiki"/>
</dbReference>
<dbReference type="GO" id="GO:0009061">
    <property type="term" value="P:anaerobic respiration"/>
    <property type="evidence" value="ECO:0000314"/>
    <property type="project" value="EcoliWiki"/>
</dbReference>
<dbReference type="GO" id="GO:0006097">
    <property type="term" value="P:glyoxylate cycle"/>
    <property type="evidence" value="ECO:0000303"/>
    <property type="project" value="EcoliWiki"/>
</dbReference>
<dbReference type="GO" id="GO:0006979">
    <property type="term" value="P:response to oxidative stress"/>
    <property type="evidence" value="ECO:0000314"/>
    <property type="project" value="EcoliWiki"/>
</dbReference>
<dbReference type="GO" id="GO:0006099">
    <property type="term" value="P:tricarboxylic acid cycle"/>
    <property type="evidence" value="ECO:0000318"/>
    <property type="project" value="GO_Central"/>
</dbReference>
<dbReference type="CDD" id="cd01586">
    <property type="entry name" value="AcnA_IRP"/>
    <property type="match status" value="1"/>
</dbReference>
<dbReference type="CDD" id="cd01580">
    <property type="entry name" value="AcnA_IRP_Swivel"/>
    <property type="match status" value="1"/>
</dbReference>
<dbReference type="FunFam" id="3.20.19.10:FF:000001">
    <property type="entry name" value="Aconitate hydratase"/>
    <property type="match status" value="1"/>
</dbReference>
<dbReference type="FunFam" id="3.30.499.10:FF:000002">
    <property type="entry name" value="Aconitate hydratase"/>
    <property type="match status" value="1"/>
</dbReference>
<dbReference type="FunFam" id="3.30.499.10:FF:000009">
    <property type="entry name" value="Aconitate hydratase"/>
    <property type="match status" value="1"/>
</dbReference>
<dbReference type="Gene3D" id="6.10.190.10">
    <property type="match status" value="1"/>
</dbReference>
<dbReference type="Gene3D" id="3.30.499.10">
    <property type="entry name" value="Aconitase, domain 3"/>
    <property type="match status" value="2"/>
</dbReference>
<dbReference type="Gene3D" id="3.20.19.10">
    <property type="entry name" value="Aconitase, domain 4"/>
    <property type="match status" value="1"/>
</dbReference>
<dbReference type="InterPro" id="IPR044137">
    <property type="entry name" value="AcnA_IRP_Swivel"/>
</dbReference>
<dbReference type="InterPro" id="IPR015931">
    <property type="entry name" value="Acnase/IPM_dHydase_lsu_aba_1/3"/>
</dbReference>
<dbReference type="InterPro" id="IPR001030">
    <property type="entry name" value="Acoase/IPM_deHydtase_lsu_aba"/>
</dbReference>
<dbReference type="InterPro" id="IPR015928">
    <property type="entry name" value="Aconitase/3IPM_dehydase_swvl"/>
</dbReference>
<dbReference type="InterPro" id="IPR006249">
    <property type="entry name" value="Aconitase/IRP2"/>
</dbReference>
<dbReference type="InterPro" id="IPR018136">
    <property type="entry name" value="Aconitase_4Fe-4S_BS"/>
</dbReference>
<dbReference type="InterPro" id="IPR036008">
    <property type="entry name" value="Aconitase_4Fe-4S_dom"/>
</dbReference>
<dbReference type="InterPro" id="IPR000573">
    <property type="entry name" value="AconitaseA/IPMdHydase_ssu_swvl"/>
</dbReference>
<dbReference type="NCBIfam" id="TIGR01341">
    <property type="entry name" value="aconitase_1"/>
    <property type="match status" value="1"/>
</dbReference>
<dbReference type="NCBIfam" id="NF006757">
    <property type="entry name" value="PRK09277.1"/>
    <property type="match status" value="1"/>
</dbReference>
<dbReference type="NCBIfam" id="NF009520">
    <property type="entry name" value="PRK12881.1"/>
    <property type="match status" value="1"/>
</dbReference>
<dbReference type="PANTHER" id="PTHR11670">
    <property type="entry name" value="ACONITASE/IRON-RESPONSIVE ELEMENT FAMILY MEMBER"/>
    <property type="match status" value="1"/>
</dbReference>
<dbReference type="Pfam" id="PF00330">
    <property type="entry name" value="Aconitase"/>
    <property type="match status" value="1"/>
</dbReference>
<dbReference type="Pfam" id="PF00694">
    <property type="entry name" value="Aconitase_C"/>
    <property type="match status" value="1"/>
</dbReference>
<dbReference type="PRINTS" id="PR00415">
    <property type="entry name" value="ACONITASE"/>
</dbReference>
<dbReference type="SUPFAM" id="SSF53732">
    <property type="entry name" value="Aconitase iron-sulfur domain"/>
    <property type="match status" value="1"/>
</dbReference>
<dbReference type="SUPFAM" id="SSF52016">
    <property type="entry name" value="LeuD/IlvD-like"/>
    <property type="match status" value="1"/>
</dbReference>
<dbReference type="PROSITE" id="PS00450">
    <property type="entry name" value="ACONITASE_1"/>
    <property type="match status" value="1"/>
</dbReference>
<dbReference type="PROSITE" id="PS01244">
    <property type="entry name" value="ACONITASE_2"/>
    <property type="match status" value="1"/>
</dbReference>
<feature type="initiator methionine" description="Removed" evidence="9">
    <location>
        <position position="1"/>
    </location>
</feature>
<feature type="chain" id="PRO_0000076661" description="Aconitate hydratase A">
    <location>
        <begin position="2"/>
        <end position="891"/>
    </location>
</feature>
<feature type="binding site" evidence="1">
    <location>
        <position position="435"/>
    </location>
    <ligand>
        <name>[4Fe-4S] cluster</name>
        <dbReference type="ChEBI" id="CHEBI:49883"/>
    </ligand>
</feature>
<feature type="binding site" evidence="1">
    <location>
        <position position="501"/>
    </location>
    <ligand>
        <name>[4Fe-4S] cluster</name>
        <dbReference type="ChEBI" id="CHEBI:49883"/>
    </ligand>
</feature>
<feature type="binding site" evidence="1">
    <location>
        <position position="504"/>
    </location>
    <ligand>
        <name>[4Fe-4S] cluster</name>
        <dbReference type="ChEBI" id="CHEBI:49883"/>
    </ligand>
</feature>
<feature type="sequence conflict" description="In Ref. 1; CAA42834 and 4; BAA14828." evidence="17" ref="1 4">
    <original>S</original>
    <variation>G</variation>
    <location>
        <position position="522"/>
    </location>
</feature>
<sequence>MSSTLREASKDTLQAKDKTYHYYSLPLAAKSLGDITRLPKSLKVLLENLLRWQDGNSVTEEDIHALAGWLKNAHADREIAYRPARVLMQDFTGVPAVVDLAAMREAVKRLGGDTAKVNPLSPVDLVIDHSVTVDRFGDDEAFEENVRLEMERNHERYVFLKWGKQAFSRFSVVPPGTGICHQVNLEYLGKAVWSELQDGEWIAYPDTLVGTDSHTTMINGLGVLGWGVGGIEAEAAMLGQPVSMLIPDVVGFKLTGKLREGITATDLVLTVTQMLRKHGVVGKFVEFYGDGLDSLPLADRATIANMSPEYGATCGFFPIDAVTLDYMRLSGRSEDQVELVEKYAKAQGMWRNPGDEPIFTSTLELDMNDVEASLAGPKRPQDRVALPDVPKAFAASNELEVNATHKDRQPVDYVMNGHQYQLPDGAVVIAAITSCTNTSNPSVLMAAGLLAKKAVTLGLKRQPWVKASLAPGSKVVSDYLAKAKLTPYLDELGFNLVGYGCTTCIGNSGPLPDPIETAIKKSDLTVGAVLSGNRNFEGRIHPLVKTNWLASPPLVVAYALAGNMNINLASEPIGHDRKGDPVYLKDIWPSAQEIARAVEQVSTEMFRKEYAEVFEGTAEWKGINVTRSDTYGWQEDSTYIRLSPFFDEMQATPAPVEDIHGARILAMLGDSVTTDHISPAGSIKPDSPAGRYLQGRGVERKDFNSYGSRRGNHEVMMRGTFANIRIRNEMVPGVEGGMTRHLPDSDVVSIYDAAMRYKQEQTPLAVIAGKEYGSGSSRDWAAKGPRLLGIRVVIAESFERIHRSNLIGMGILPLEFPQGVTRKTLGLTGEEKIDIGDLQNLQPGATVPVTLTRADGSQEVVPCRCRIDTATELTYYQNDGILHYVIRNMLK</sequence>
<keyword id="KW-0004">4Fe-4S</keyword>
<keyword id="KW-0903">Direct protein sequencing</keyword>
<keyword id="KW-0408">Iron</keyword>
<keyword id="KW-0411">Iron-sulfur</keyword>
<keyword id="KW-0456">Lyase</keyword>
<keyword id="KW-0479">Metal-binding</keyword>
<keyword id="KW-1185">Reference proteome</keyword>
<keyword id="KW-0694">RNA-binding</keyword>
<keyword id="KW-0816">Tricarboxylic acid cycle</keyword>
<evidence type="ECO:0000250" key="1">
    <source>
        <dbReference type="UniProtKB" id="P36683"/>
    </source>
</evidence>
<evidence type="ECO:0000269" key="2">
    <source>
    </source>
</evidence>
<evidence type="ECO:0000269" key="3">
    <source>
    </source>
</evidence>
<evidence type="ECO:0000269" key="4">
    <source>
    </source>
</evidence>
<evidence type="ECO:0000269" key="5">
    <source>
    </source>
</evidence>
<evidence type="ECO:0000269" key="6">
    <source>
    </source>
</evidence>
<evidence type="ECO:0000269" key="7">
    <source>
    </source>
</evidence>
<evidence type="ECO:0000269" key="8">
    <source>
    </source>
</evidence>
<evidence type="ECO:0000269" key="9">
    <source>
    </source>
</evidence>
<evidence type="ECO:0000269" key="10">
    <source>
    </source>
</evidence>
<evidence type="ECO:0000269" key="11">
    <source>
    </source>
</evidence>
<evidence type="ECO:0000269" key="12">
    <source>
    </source>
</evidence>
<evidence type="ECO:0000269" key="13">
    <source>
    </source>
</evidence>
<evidence type="ECO:0000303" key="14">
    <source>
    </source>
</evidence>
<evidence type="ECO:0000303" key="15">
    <source>
    </source>
</evidence>
<evidence type="ECO:0000303" key="16">
    <source>
    </source>
</evidence>
<evidence type="ECO:0000305" key="17"/>
<evidence type="ECO:0000305" key="18">
    <source>
    </source>
</evidence>
<comment type="function">
    <text evidence="2 3 5 6 9 13">Catalyzes the reversible isomerization of citrate to isocitrate via cis-aconitate. The apo form of AcnA functions as a RNA-binding regulatory protein which plays a role as a maintenance or survival enzyme during nutritional or oxidative stress. During oxidative stress inactive AcnA apo-enzyme without iron sulfur clusters binds the acnA mRNA 3' UTRs (untranslated regions), stabilizes acnA mRNA and increases AcnA synthesis, thus mediating a post-transcriptional positive autoregulatory switch. AcnA also enhances the stability of the sodA transcript.</text>
</comment>
<comment type="catalytic activity">
    <reaction evidence="2">
        <text>citrate = D-threo-isocitrate</text>
        <dbReference type="Rhea" id="RHEA:10336"/>
        <dbReference type="ChEBI" id="CHEBI:15562"/>
        <dbReference type="ChEBI" id="CHEBI:16947"/>
        <dbReference type="EC" id="4.2.1.3"/>
    </reaction>
</comment>
<comment type="cofactor">
    <cofactor evidence="2 10">
        <name>[4Fe-4S] cluster</name>
        <dbReference type="ChEBI" id="CHEBI:49883"/>
    </cofactor>
    <text evidence="2 10">Binds 1 [4Fe-4S] cluster per subunit.</text>
</comment>
<comment type="biophysicochemical properties">
    <kinetics>
        <KM evidence="2">1.16 mM for citrate</KM>
        <KM evidence="2">0.058 mM for cis-aconitate</KM>
        <KM evidence="2">0.014 mM for isocitrate (using 0.01-0.8 mM substrate)</KM>
        <KM evidence="2">1.77 mM for isocitrate (using 0.8-40 mM substrate)</KM>
        <Vmax evidence="2">6.13 umol/min/mg enzyme with citrate as substrate</Vmax>
        <Vmax evidence="2">14.5 umol/min/mg enzyme with cis-aconitate as substrate</Vmax>
        <Vmax evidence="2">3.57 umol/min/mg enzyme using 0.01-0.8 mM isocitrate as substrate</Vmax>
        <Vmax evidence="2">14.7 umol/min/mg enzyme using 0.8-40 mM isocitrate as substrate</Vmax>
    </kinetics>
    <phDependence>
        <text evidence="2">Optimum pH is 7.4. It retains a high specific activity over a broad pH range.</text>
    </phDependence>
</comment>
<comment type="pathway">
    <text evidence="17">Carbohydrate metabolism; tricarboxylic acid cycle; isocitrate from oxaloacetate: step 2/2.</text>
</comment>
<comment type="subunit">
    <text evidence="9">Monomer.</text>
</comment>
<comment type="induction">
    <text evidence="4 7 8 11 13">Induced upon entry into stationary phase by iron, oxidative and salt stress under aerobic conditions. AcnA is subject to CRP-mediated catabolite repression and ArcA-mediated anaerobic repression. AcnA is negatively regulated by ryhB RNA.</text>
</comment>
<comment type="disruption phenotype">
    <text evidence="5 6 11 12">Cells lacking this gene are more sensitive to peroxide stress. The acnAB double mutant does not grow on unsupplemented glucose minimal medium and does not respond under aerobic conditions to glutamate. The acnAB double mutant retains a low but significant aconitase activity.</text>
</comment>
<comment type="miscellaneous">
    <text evidence="2 6">The AcnA activity over a broad pH range might be a useful adaptation for specifically expression in the stationary phase, where the intracellular pH may vary over a wider range. AcnA is resistant to oxidation in vivo.</text>
</comment>
<comment type="similarity">
    <text evidence="17">Belongs to the aconitase/IPM isomerase family.</text>
</comment>
<protein>
    <recommendedName>
        <fullName evidence="14">Aconitate hydratase A</fullName>
        <shortName evidence="14">ACN</shortName>
        <shortName evidence="14">Aconitase</shortName>
        <ecNumber evidence="2">4.2.1.3</ecNumber>
    </recommendedName>
    <alternativeName>
        <fullName evidence="18">Iron-responsive protein-like</fullName>
        <shortName evidence="18">IRP-like</shortName>
    </alternativeName>
    <alternativeName>
        <fullName evidence="15">RNA-binding protein</fullName>
    </alternativeName>
    <alternativeName>
        <fullName evidence="15">Stationary phase enzyme</fullName>
    </alternativeName>
</protein>
<reference key="1">
    <citation type="journal article" date="1992" name="Eur. J. Biochem.">
        <title>The aconitase of Escherichia coli. Nucleotide sequence of the aconitase gene and amino acid sequence similarity with mitochondrial aconitases, the iron-responsive-element-binding protein and isopropylmalate isomerases.</title>
        <authorList>
            <person name="Prodromou C."/>
            <person name="Artymiuk P.J."/>
            <person name="Guest J.R."/>
        </authorList>
    </citation>
    <scope>NUCLEOTIDE SEQUENCE [GENOMIC DNA]</scope>
</reference>
<reference key="2">
    <citation type="journal article" date="1996" name="DNA Res.">
        <title>A 570-kb DNA sequence of the Escherichia coli K-12 genome corresponding to the 28.0-40.1 min region on the linkage map.</title>
        <authorList>
            <person name="Aiba H."/>
            <person name="Baba T."/>
            <person name="Fujita K."/>
            <person name="Hayashi K."/>
            <person name="Inada T."/>
            <person name="Isono K."/>
            <person name="Itoh T."/>
            <person name="Kasai H."/>
            <person name="Kashimoto K."/>
            <person name="Kimura S."/>
            <person name="Kitakawa M."/>
            <person name="Kitagawa M."/>
            <person name="Makino K."/>
            <person name="Miki T."/>
            <person name="Mizobuchi K."/>
            <person name="Mori H."/>
            <person name="Mori T."/>
            <person name="Motomura K."/>
            <person name="Nakade S."/>
            <person name="Nakamura Y."/>
            <person name="Nashimoto H."/>
            <person name="Nishio Y."/>
            <person name="Oshima T."/>
            <person name="Saito N."/>
            <person name="Sampei G."/>
            <person name="Seki Y."/>
            <person name="Sivasundaram S."/>
            <person name="Tagami H."/>
            <person name="Takeda J."/>
            <person name="Takemoto K."/>
            <person name="Takeuchi Y."/>
            <person name="Wada C."/>
            <person name="Yamamoto Y."/>
            <person name="Horiuchi T."/>
        </authorList>
    </citation>
    <scope>NUCLEOTIDE SEQUENCE [LARGE SCALE GENOMIC DNA]</scope>
    <source>
        <strain>K12 / W3110 / ATCC 27325 / DSM 5911</strain>
    </source>
</reference>
<reference key="3">
    <citation type="journal article" date="1997" name="Science">
        <title>The complete genome sequence of Escherichia coli K-12.</title>
        <authorList>
            <person name="Blattner F.R."/>
            <person name="Plunkett G. III"/>
            <person name="Bloch C.A."/>
            <person name="Perna N.T."/>
            <person name="Burland V."/>
            <person name="Riley M."/>
            <person name="Collado-Vides J."/>
            <person name="Glasner J.D."/>
            <person name="Rode C.K."/>
            <person name="Mayhew G.F."/>
            <person name="Gregor J."/>
            <person name="Davis N.W."/>
            <person name="Kirkpatrick H.A."/>
            <person name="Goeden M.A."/>
            <person name="Rose D.J."/>
            <person name="Mau B."/>
            <person name="Shao Y."/>
        </authorList>
    </citation>
    <scope>NUCLEOTIDE SEQUENCE [LARGE SCALE GENOMIC DNA]</scope>
    <source>
        <strain>K12 / MG1655 / ATCC 47076</strain>
    </source>
</reference>
<reference key="4">
    <citation type="journal article" date="2006" name="Mol. Syst. Biol.">
        <title>Highly accurate genome sequences of Escherichia coli K-12 strains MG1655 and W3110.</title>
        <authorList>
            <person name="Hayashi K."/>
            <person name="Morooka N."/>
            <person name="Yamamoto Y."/>
            <person name="Fujita K."/>
            <person name="Isono K."/>
            <person name="Choi S."/>
            <person name="Ohtsubo E."/>
            <person name="Baba T."/>
            <person name="Wanner B.L."/>
            <person name="Mori H."/>
            <person name="Horiuchi T."/>
        </authorList>
    </citation>
    <scope>NUCLEOTIDE SEQUENCE [LARGE SCALE GENOMIC DNA]</scope>
    <source>
        <strain>K12 / W3110 / ATCC 27325 / DSM 5911</strain>
    </source>
</reference>
<reference key="5">
    <citation type="journal article" date="1991" name="J. Gen. Microbiol.">
        <title>The aconitase of Escherichia coli: purification of the enzyme and molecular cloning and map location of the gene (acn).</title>
        <authorList>
            <person name="Prodromou C."/>
            <person name="Haynes M.J."/>
            <person name="Guest J.R."/>
        </authorList>
    </citation>
    <scope>PROTEIN SEQUENCE OF 2-19</scope>
    <scope>FUNCTION</scope>
    <scope>SUBUNIT</scope>
</reference>
<reference key="6">
    <citation type="journal article" date="1994" name="Microbiology">
        <title>Two genetically-distinct and differentially-regulated aconitases (AcnA and AcnB) in Escherichia coli.</title>
        <authorList>
            <person name="Gruer M.J."/>
            <person name="Guest J.R."/>
        </authorList>
    </citation>
    <scope>INDUCTION</scope>
    <scope>DISRUPTION PHENOTYPE</scope>
</reference>
<reference key="7">
    <citation type="journal article" date="1995" name="Eur. J. Biochem.">
        <title>Spectroscopic characterisation of an aconitase (AcnA) of Escherichia coli.</title>
        <authorList>
            <person name="Bennett B."/>
            <person name="Gruer M.J."/>
            <person name="Guest J.R."/>
            <person name="Thomson A.J."/>
        </authorList>
    </citation>
    <scope>COFACTOR</scope>
</reference>
<reference key="8">
    <citation type="journal article" date="1997" name="Microbiology">
        <title>Construction and properties of aconitase mutants of Escherichia coli.</title>
        <authorList>
            <person name="Gruer M.J."/>
            <person name="Bradbury A.J."/>
            <person name="Guest J.R."/>
        </authorList>
    </citation>
    <scope>DISRUPTION PHENOTYPE</scope>
</reference>
<reference key="9">
    <citation type="journal article" date="1997" name="Microbiology">
        <title>Transcriptional regulation of the aconitase genes (acnA and acnB) of Escherichia coli.</title>
        <authorList>
            <person name="Cunningham L."/>
            <person name="Gruer M.J."/>
            <person name="Guest J.R."/>
        </authorList>
    </citation>
    <scope>FUNCTION</scope>
    <scope>INDUCTION</scope>
</reference>
<reference key="10">
    <citation type="journal article" date="1999" name="Biochem. J.">
        <title>Biochemical and spectroscopic characterization of Escherichia coli aconitases (AcnA and AcnB).</title>
        <authorList>
            <person name="Jordan P.A."/>
            <person name="Tang Y."/>
            <person name="Bradbury A.J."/>
            <person name="Thomson A.J."/>
            <person name="Guest J.R."/>
        </authorList>
    </citation>
    <scope>FUNCTION</scope>
    <scope>CATALYTIC ACTIVITY</scope>
    <scope>BIOPHYSICOCHEMICAL PROPERTIES</scope>
    <scope>MAGNETIC CIRCULAR DICHROISM</scope>
    <scope>EPR SPECTROSCOPY</scope>
    <scope>COFACTOR</scope>
</reference>
<reference key="11">
    <citation type="journal article" date="1999" name="Microbiology">
        <title>Direct evidence for mRNA binding and post-transcriptional regulation by Escherichia coli aconitases.</title>
        <authorList>
            <person name="Tang Y."/>
            <person name="Guest J.R."/>
        </authorList>
    </citation>
    <scope>FUNCTION AS A RNA-BINDING PROTEIN</scope>
</reference>
<reference key="12">
    <citation type="journal article" date="2002" name="Microbiology">
        <title>Escherichia coli aconitases and oxidative stress: post-transcriptional regulation of sodA expression.</title>
        <authorList>
            <person name="Tang Y."/>
            <person name="Quail M.A."/>
            <person name="Artymiuk P.J."/>
            <person name="Guest J.R."/>
            <person name="Green J."/>
        </authorList>
    </citation>
    <scope>FUNCTION</scope>
    <scope>DISRUPTION PHENOTYPE</scope>
</reference>
<reference key="13">
    <citation type="journal article" date="2002" name="Proc. Natl. Acad. Sci. U.S.A.">
        <title>A small RNA regulates the expression of genes involved in iron metabolism in Escherichia coli.</title>
        <authorList>
            <person name="Masse E."/>
            <person name="Gottesman S."/>
        </authorList>
    </citation>
    <scope>INDUCTION</scope>
</reference>
<reference key="14">
    <citation type="journal article" date="2003" name="J. Bacteriol.">
        <title>Contrasting sensitivities of Escherichia coli aconitases A and B to oxidation and iron depletion.</title>
        <authorList>
            <person name="Varghese S."/>
            <person name="Tang Y."/>
            <person name="Imlay J.A."/>
        </authorList>
    </citation>
    <scope>FUNCTION</scope>
    <scope>DISRUPTION PHENOTYPE</scope>
</reference>
<reference key="15">
    <citation type="journal article" date="2005" name="Biotechnol. Bioeng.">
        <title>Quantitative and kinetic study of oxidative stress regulons using green fluorescent protein.</title>
        <authorList>
            <person name="Lu C."/>
            <person name="Albano C.R."/>
            <person name="Bentley W.E."/>
            <person name="Rao G."/>
        </authorList>
    </citation>
    <scope>INDUCTION</scope>
</reference>
<reference key="16">
    <citation type="journal article" date="2006" name="J. Bacteriol.">
        <title>Time-dependent proteome alterations under osmotic stress during aerobic and anaerobic growth in Escherichia coli.</title>
        <authorList>
            <person name="Weber A."/>
            <person name="Kogl S.A."/>
            <person name="Jung K."/>
        </authorList>
    </citation>
    <scope>INDUCTION</scope>
</reference>
<organism>
    <name type="scientific">Escherichia coli (strain K12)</name>
    <dbReference type="NCBI Taxonomy" id="83333"/>
    <lineage>
        <taxon>Bacteria</taxon>
        <taxon>Pseudomonadati</taxon>
        <taxon>Pseudomonadota</taxon>
        <taxon>Gammaproteobacteria</taxon>
        <taxon>Enterobacterales</taxon>
        <taxon>Enterobacteriaceae</taxon>
        <taxon>Escherichia</taxon>
    </lineage>
</organism>
<gene>
    <name evidence="16" type="primary">acnA</name>
    <name type="synonym">acn</name>
    <name type="ordered locus">b1276</name>
    <name type="ordered locus">JW1268</name>
</gene>
<name>ACNA_ECOLI</name>